<dbReference type="EC" id="3.1.1.29" evidence="1"/>
<dbReference type="EMBL" id="AP009153">
    <property type="protein sequence ID" value="BAH38259.1"/>
    <property type="molecule type" value="Genomic_DNA"/>
</dbReference>
<dbReference type="SMR" id="C1A7P9"/>
<dbReference type="STRING" id="379066.GAU_1217"/>
<dbReference type="KEGG" id="gau:GAU_1217"/>
<dbReference type="eggNOG" id="COG0193">
    <property type="taxonomic scope" value="Bacteria"/>
</dbReference>
<dbReference type="HOGENOM" id="CLU_062456_4_1_0"/>
<dbReference type="Proteomes" id="UP000002209">
    <property type="component" value="Chromosome"/>
</dbReference>
<dbReference type="GO" id="GO:0005737">
    <property type="term" value="C:cytoplasm"/>
    <property type="evidence" value="ECO:0007669"/>
    <property type="project" value="UniProtKB-SubCell"/>
</dbReference>
<dbReference type="GO" id="GO:0004045">
    <property type="term" value="F:peptidyl-tRNA hydrolase activity"/>
    <property type="evidence" value="ECO:0007669"/>
    <property type="project" value="UniProtKB-UniRule"/>
</dbReference>
<dbReference type="GO" id="GO:0000049">
    <property type="term" value="F:tRNA binding"/>
    <property type="evidence" value="ECO:0007669"/>
    <property type="project" value="UniProtKB-UniRule"/>
</dbReference>
<dbReference type="GO" id="GO:0006515">
    <property type="term" value="P:protein quality control for misfolded or incompletely synthesized proteins"/>
    <property type="evidence" value="ECO:0007669"/>
    <property type="project" value="UniProtKB-UniRule"/>
</dbReference>
<dbReference type="GO" id="GO:0072344">
    <property type="term" value="P:rescue of stalled ribosome"/>
    <property type="evidence" value="ECO:0007669"/>
    <property type="project" value="UniProtKB-UniRule"/>
</dbReference>
<dbReference type="CDD" id="cd00462">
    <property type="entry name" value="PTH"/>
    <property type="match status" value="1"/>
</dbReference>
<dbReference type="Gene3D" id="3.40.50.1470">
    <property type="entry name" value="Peptidyl-tRNA hydrolase"/>
    <property type="match status" value="1"/>
</dbReference>
<dbReference type="HAMAP" id="MF_00083">
    <property type="entry name" value="Pept_tRNA_hydro_bact"/>
    <property type="match status" value="1"/>
</dbReference>
<dbReference type="InterPro" id="IPR001328">
    <property type="entry name" value="Pept_tRNA_hydro"/>
</dbReference>
<dbReference type="InterPro" id="IPR018171">
    <property type="entry name" value="Pept_tRNA_hydro_CS"/>
</dbReference>
<dbReference type="InterPro" id="IPR036416">
    <property type="entry name" value="Pept_tRNA_hydro_sf"/>
</dbReference>
<dbReference type="NCBIfam" id="TIGR00447">
    <property type="entry name" value="pth"/>
    <property type="match status" value="1"/>
</dbReference>
<dbReference type="PANTHER" id="PTHR17224">
    <property type="entry name" value="PEPTIDYL-TRNA HYDROLASE"/>
    <property type="match status" value="1"/>
</dbReference>
<dbReference type="PANTHER" id="PTHR17224:SF1">
    <property type="entry name" value="PEPTIDYL-TRNA HYDROLASE"/>
    <property type="match status" value="1"/>
</dbReference>
<dbReference type="Pfam" id="PF01195">
    <property type="entry name" value="Pept_tRNA_hydro"/>
    <property type="match status" value="1"/>
</dbReference>
<dbReference type="SUPFAM" id="SSF53178">
    <property type="entry name" value="Peptidyl-tRNA hydrolase-like"/>
    <property type="match status" value="1"/>
</dbReference>
<dbReference type="PROSITE" id="PS01195">
    <property type="entry name" value="PEPT_TRNA_HYDROL_1"/>
    <property type="match status" value="1"/>
</dbReference>
<dbReference type="PROSITE" id="PS01196">
    <property type="entry name" value="PEPT_TRNA_HYDROL_2"/>
    <property type="match status" value="1"/>
</dbReference>
<proteinExistence type="inferred from homology"/>
<feature type="chain" id="PRO_1000202585" description="Peptidyl-tRNA hydrolase">
    <location>
        <begin position="1"/>
        <end position="190"/>
    </location>
</feature>
<feature type="active site" description="Proton acceptor" evidence="1">
    <location>
        <position position="19"/>
    </location>
</feature>
<feature type="binding site" evidence="1">
    <location>
        <position position="14"/>
    </location>
    <ligand>
        <name>tRNA</name>
        <dbReference type="ChEBI" id="CHEBI:17843"/>
    </ligand>
</feature>
<feature type="binding site" evidence="1">
    <location>
        <position position="64"/>
    </location>
    <ligand>
        <name>tRNA</name>
        <dbReference type="ChEBI" id="CHEBI:17843"/>
    </ligand>
</feature>
<feature type="binding site" evidence="1">
    <location>
        <position position="66"/>
    </location>
    <ligand>
        <name>tRNA</name>
        <dbReference type="ChEBI" id="CHEBI:17843"/>
    </ligand>
</feature>
<feature type="binding site" evidence="1">
    <location>
        <position position="113"/>
    </location>
    <ligand>
        <name>tRNA</name>
        <dbReference type="ChEBI" id="CHEBI:17843"/>
    </ligand>
</feature>
<feature type="site" description="Discriminates between blocked and unblocked aminoacyl-tRNA" evidence="1">
    <location>
        <position position="9"/>
    </location>
</feature>
<feature type="site" description="Stabilizes the basic form of H active site to accept a proton" evidence="1">
    <location>
        <position position="92"/>
    </location>
</feature>
<keyword id="KW-0963">Cytoplasm</keyword>
<keyword id="KW-0378">Hydrolase</keyword>
<keyword id="KW-1185">Reference proteome</keyword>
<keyword id="KW-0694">RNA-binding</keyword>
<keyword id="KW-0820">tRNA-binding</keyword>
<sequence length="190" mass="21367">MKVIVGLGNPGREYENTRHNVGWWLIDTLKERWHFEPWRKDGDAVSTTGLVGTKKVKLVKPQTYMNLSGSVLRPYLKREGWTAAQDLMVLVDEVAVPVGEYRLRAAGSPGGHNGLKSIEAHLKSPTYPRLRVGIKPVDERRQIGDLADFVLHTMPRDERALVDDITPRMIDAIELWIAEGTEKAVSSMGR</sequence>
<gene>
    <name evidence="1" type="primary">pth</name>
    <name type="ordered locus">GAU_1217</name>
</gene>
<evidence type="ECO:0000255" key="1">
    <source>
        <dbReference type="HAMAP-Rule" id="MF_00083"/>
    </source>
</evidence>
<reference key="1">
    <citation type="submission" date="2006-03" db="EMBL/GenBank/DDBJ databases">
        <title>Complete genome sequence of Gemmatimonas aurantiaca T-27 that represents a novel phylum Gemmatimonadetes.</title>
        <authorList>
            <person name="Takasaki K."/>
            <person name="Ichikawa N."/>
            <person name="Miura H."/>
            <person name="Matsushita S."/>
            <person name="Watanabe Y."/>
            <person name="Oguchi A."/>
            <person name="Ankai A."/>
            <person name="Yashiro I."/>
            <person name="Takahashi M."/>
            <person name="Terui Y."/>
            <person name="Fukui S."/>
            <person name="Yokoyama H."/>
            <person name="Tanikawa S."/>
            <person name="Hanada S."/>
            <person name="Kamagata Y."/>
            <person name="Fujita N."/>
        </authorList>
    </citation>
    <scope>NUCLEOTIDE SEQUENCE [LARGE SCALE GENOMIC DNA]</scope>
    <source>
        <strain>DSM 14586 / JCM 11422 / NBRC 100505 / T-27</strain>
    </source>
</reference>
<protein>
    <recommendedName>
        <fullName evidence="1">Peptidyl-tRNA hydrolase</fullName>
        <shortName evidence="1">Pth</shortName>
        <ecNumber evidence="1">3.1.1.29</ecNumber>
    </recommendedName>
</protein>
<name>PTH_GEMAT</name>
<comment type="function">
    <text evidence="1">Hydrolyzes ribosome-free peptidyl-tRNAs (with 1 or more amino acids incorporated), which drop off the ribosome during protein synthesis, or as a result of ribosome stalling.</text>
</comment>
<comment type="function">
    <text evidence="1">Catalyzes the release of premature peptidyl moieties from peptidyl-tRNA molecules trapped in stalled 50S ribosomal subunits, and thus maintains levels of free tRNAs and 50S ribosomes.</text>
</comment>
<comment type="catalytic activity">
    <reaction evidence="1">
        <text>an N-acyl-L-alpha-aminoacyl-tRNA + H2O = an N-acyl-L-amino acid + a tRNA + H(+)</text>
        <dbReference type="Rhea" id="RHEA:54448"/>
        <dbReference type="Rhea" id="RHEA-COMP:10123"/>
        <dbReference type="Rhea" id="RHEA-COMP:13883"/>
        <dbReference type="ChEBI" id="CHEBI:15377"/>
        <dbReference type="ChEBI" id="CHEBI:15378"/>
        <dbReference type="ChEBI" id="CHEBI:59874"/>
        <dbReference type="ChEBI" id="CHEBI:78442"/>
        <dbReference type="ChEBI" id="CHEBI:138191"/>
        <dbReference type="EC" id="3.1.1.29"/>
    </reaction>
</comment>
<comment type="subunit">
    <text evidence="1">Monomer.</text>
</comment>
<comment type="subcellular location">
    <subcellularLocation>
        <location evidence="1">Cytoplasm</location>
    </subcellularLocation>
</comment>
<comment type="similarity">
    <text evidence="1">Belongs to the PTH family.</text>
</comment>
<accession>C1A7P9</accession>
<organism>
    <name type="scientific">Gemmatimonas aurantiaca (strain DSM 14586 / JCM 11422 / NBRC 100505 / T-27)</name>
    <dbReference type="NCBI Taxonomy" id="379066"/>
    <lineage>
        <taxon>Bacteria</taxon>
        <taxon>Pseudomonadati</taxon>
        <taxon>Gemmatimonadota</taxon>
        <taxon>Gemmatimonadia</taxon>
        <taxon>Gemmatimonadales</taxon>
        <taxon>Gemmatimonadaceae</taxon>
        <taxon>Gemmatimonas</taxon>
    </lineage>
</organism>